<gene>
    <name type="primary">seh1l</name>
</gene>
<sequence length="364" mass="39844">MFVARSIAADHKDLIHDVSYDFHGRRMATCSSDQSVKVWDKSDNGEWNCTASWKTHSGSVWRVTWAHPEFGQVLASCSFDRTAAVWEEIVGESNDKQRGLSHWIKRTTLVDSRTSVTDVKFAPKHMGLMLTTCSADGVVRIYEAPDVMNLSQWSLQHEISCKLSCSCISWNPSSSRAHSPMIAVGSDDSNTAYSGKVQIYEYVENTRKYAKVETLMTVTDPVHDIAFAPNLGRSFHVLAIATKDVRIFKLIPMRKESSSSGPTKLEVQLQAQFDGHNSQVWRVSWNITSTLLASSGDDGCVRLWKANYMDNWKCTGILRGDGSPVNGAAGQAGTPGAAGTPGGPASQNALQAVAGRKKAQLMPG</sequence>
<evidence type="ECO:0000250" key="1">
    <source>
        <dbReference type="UniProtKB" id="Q96EE3"/>
    </source>
</evidence>
<evidence type="ECO:0000256" key="2">
    <source>
        <dbReference type="SAM" id="MobiDB-lite"/>
    </source>
</evidence>
<evidence type="ECO:0000305" key="3"/>
<dbReference type="EMBL" id="BT075012">
    <property type="protein sequence ID" value="ACO09436.1"/>
    <property type="molecule type" value="mRNA"/>
</dbReference>
<dbReference type="SMR" id="C1BK83"/>
<dbReference type="GO" id="GO:0061700">
    <property type="term" value="C:GATOR2 complex"/>
    <property type="evidence" value="ECO:0000250"/>
    <property type="project" value="UniProtKB"/>
</dbReference>
<dbReference type="GO" id="GO:0000776">
    <property type="term" value="C:kinetochore"/>
    <property type="evidence" value="ECO:0007669"/>
    <property type="project" value="UniProtKB-KW"/>
</dbReference>
<dbReference type="GO" id="GO:0005765">
    <property type="term" value="C:lysosomal membrane"/>
    <property type="evidence" value="ECO:0000250"/>
    <property type="project" value="UniProtKB"/>
</dbReference>
<dbReference type="GO" id="GO:0031080">
    <property type="term" value="C:nuclear pore outer ring"/>
    <property type="evidence" value="ECO:0000250"/>
    <property type="project" value="UniProtKB"/>
</dbReference>
<dbReference type="GO" id="GO:0005198">
    <property type="term" value="F:structural molecule activity"/>
    <property type="evidence" value="ECO:0007669"/>
    <property type="project" value="InterPro"/>
</dbReference>
<dbReference type="GO" id="GO:0051315">
    <property type="term" value="P:attachment of mitotic spindle microtubules to kinetochore"/>
    <property type="evidence" value="ECO:0000250"/>
    <property type="project" value="UniProtKB"/>
</dbReference>
<dbReference type="GO" id="GO:0051301">
    <property type="term" value="P:cell division"/>
    <property type="evidence" value="ECO:0007669"/>
    <property type="project" value="UniProtKB-KW"/>
</dbReference>
<dbReference type="GO" id="GO:0034198">
    <property type="term" value="P:cellular response to amino acid starvation"/>
    <property type="evidence" value="ECO:0007669"/>
    <property type="project" value="TreeGrafter"/>
</dbReference>
<dbReference type="GO" id="GO:0031669">
    <property type="term" value="P:cellular response to nutrient levels"/>
    <property type="evidence" value="ECO:0000250"/>
    <property type="project" value="UniProtKB"/>
</dbReference>
<dbReference type="GO" id="GO:0007080">
    <property type="term" value="P:mitotic metaphase chromosome alignment"/>
    <property type="evidence" value="ECO:0000250"/>
    <property type="project" value="UniProtKB"/>
</dbReference>
<dbReference type="GO" id="GO:0051028">
    <property type="term" value="P:mRNA transport"/>
    <property type="evidence" value="ECO:0007669"/>
    <property type="project" value="UniProtKB-KW"/>
</dbReference>
<dbReference type="GO" id="GO:0006999">
    <property type="term" value="P:nuclear pore organization"/>
    <property type="evidence" value="ECO:0000250"/>
    <property type="project" value="UniProtKB"/>
</dbReference>
<dbReference type="GO" id="GO:1904263">
    <property type="term" value="P:positive regulation of TORC1 signaling"/>
    <property type="evidence" value="ECO:0000250"/>
    <property type="project" value="UniProtKB"/>
</dbReference>
<dbReference type="GO" id="GO:0015031">
    <property type="term" value="P:protein transport"/>
    <property type="evidence" value="ECO:0007669"/>
    <property type="project" value="UniProtKB-KW"/>
</dbReference>
<dbReference type="FunFam" id="2.130.10.10:FF:000063">
    <property type="entry name" value="SEH1 like nucleoporin"/>
    <property type="match status" value="1"/>
</dbReference>
<dbReference type="Gene3D" id="2.130.10.10">
    <property type="entry name" value="YVTN repeat-like/Quinoprotein amine dehydrogenase"/>
    <property type="match status" value="1"/>
</dbReference>
<dbReference type="InterPro" id="IPR020472">
    <property type="entry name" value="G-protein_beta_WD-40_rep"/>
</dbReference>
<dbReference type="InterPro" id="IPR037363">
    <property type="entry name" value="Sec13/Seh1_fam"/>
</dbReference>
<dbReference type="InterPro" id="IPR015943">
    <property type="entry name" value="WD40/YVTN_repeat-like_dom_sf"/>
</dbReference>
<dbReference type="InterPro" id="IPR036322">
    <property type="entry name" value="WD40_repeat_dom_sf"/>
</dbReference>
<dbReference type="InterPro" id="IPR001680">
    <property type="entry name" value="WD40_rpt"/>
</dbReference>
<dbReference type="PANTHER" id="PTHR11024">
    <property type="entry name" value="NUCLEAR PORE COMPLEX PROTEIN SEC13 / SEH1 FAMILY MEMBER"/>
    <property type="match status" value="1"/>
</dbReference>
<dbReference type="PANTHER" id="PTHR11024:SF3">
    <property type="entry name" value="NUCLEOPORIN SEH1"/>
    <property type="match status" value="1"/>
</dbReference>
<dbReference type="Pfam" id="PF00400">
    <property type="entry name" value="WD40"/>
    <property type="match status" value="4"/>
</dbReference>
<dbReference type="PRINTS" id="PR00320">
    <property type="entry name" value="GPROTEINBRPT"/>
</dbReference>
<dbReference type="SMART" id="SM00320">
    <property type="entry name" value="WD40"/>
    <property type="match status" value="5"/>
</dbReference>
<dbReference type="SUPFAM" id="SSF50978">
    <property type="entry name" value="WD40 repeat-like"/>
    <property type="match status" value="1"/>
</dbReference>
<dbReference type="PROSITE" id="PS50082">
    <property type="entry name" value="WD_REPEATS_2"/>
    <property type="match status" value="2"/>
</dbReference>
<dbReference type="PROSITE" id="PS50294">
    <property type="entry name" value="WD_REPEATS_REGION"/>
    <property type="match status" value="2"/>
</dbReference>
<keyword id="KW-0131">Cell cycle</keyword>
<keyword id="KW-0132">Cell division</keyword>
<keyword id="KW-0137">Centromere</keyword>
<keyword id="KW-0158">Chromosome</keyword>
<keyword id="KW-0159">Chromosome partition</keyword>
<keyword id="KW-0995">Kinetochore</keyword>
<keyword id="KW-0458">Lysosome</keyword>
<keyword id="KW-0472">Membrane</keyword>
<keyword id="KW-0498">Mitosis</keyword>
<keyword id="KW-0509">mRNA transport</keyword>
<keyword id="KW-0906">Nuclear pore complex</keyword>
<keyword id="KW-0539">Nucleus</keyword>
<keyword id="KW-0653">Protein transport</keyword>
<keyword id="KW-0677">Repeat</keyword>
<keyword id="KW-0811">Translocation</keyword>
<keyword id="KW-0813">Transport</keyword>
<keyword id="KW-0853">WD repeat</keyword>
<reference key="1">
    <citation type="submission" date="2009-03" db="EMBL/GenBank/DDBJ databases">
        <title>Osmerus mordax full-length cDNAs.</title>
        <authorList>
            <person name="von Schalburg K."/>
            <person name="Leong J."/>
            <person name="Cooper G.A."/>
            <person name="Davidson W.S."/>
            <person name="Koop B.F."/>
        </authorList>
    </citation>
    <scope>NUCLEOTIDE SEQUENCE [LARGE SCALE MRNA]</scope>
    <source>
        <tissue>Brain</tissue>
    </source>
</reference>
<protein>
    <recommendedName>
        <fullName evidence="3">Nucleoporin SEH1</fullName>
    </recommendedName>
    <alternativeName>
        <fullName evidence="3">GATOR2 complex protein SEH1</fullName>
    </alternativeName>
    <alternativeName>
        <fullName>Nup107-160 subcomplex subunit seh1</fullName>
    </alternativeName>
</protein>
<feature type="chain" id="PRO_0000383046" description="Nucleoporin SEH1">
    <location>
        <begin position="1"/>
        <end position="364"/>
    </location>
</feature>
<feature type="repeat" description="WD 1">
    <location>
        <begin position="10"/>
        <end position="49"/>
    </location>
</feature>
<feature type="repeat" description="WD 2">
    <location>
        <begin position="55"/>
        <end position="96"/>
    </location>
</feature>
<feature type="repeat" description="WD 3">
    <location>
        <begin position="111"/>
        <end position="152"/>
    </location>
</feature>
<feature type="repeat" description="WD 4">
    <location>
        <begin position="160"/>
        <end position="210"/>
    </location>
</feature>
<feature type="repeat" description="WD 5">
    <location>
        <begin position="217"/>
        <end position="258"/>
    </location>
</feature>
<feature type="repeat" description="WD 6">
    <location>
        <begin position="275"/>
        <end position="314"/>
    </location>
</feature>
<feature type="region of interest" description="Disordered" evidence="2">
    <location>
        <begin position="326"/>
        <end position="364"/>
    </location>
</feature>
<feature type="compositionally biased region" description="Low complexity" evidence="2">
    <location>
        <begin position="327"/>
        <end position="338"/>
    </location>
</feature>
<feature type="compositionally biased region" description="Basic residues" evidence="2">
    <location>
        <begin position="355"/>
        <end position="364"/>
    </location>
</feature>
<accession>C1BK83</accession>
<proteinExistence type="evidence at transcript level"/>
<organism>
    <name type="scientific">Osmerus mordax</name>
    <name type="common">Rainbow smelt</name>
    <name type="synonym">Atherina mordax</name>
    <dbReference type="NCBI Taxonomy" id="8014"/>
    <lineage>
        <taxon>Eukaryota</taxon>
        <taxon>Metazoa</taxon>
        <taxon>Chordata</taxon>
        <taxon>Craniata</taxon>
        <taxon>Vertebrata</taxon>
        <taxon>Euteleostomi</taxon>
        <taxon>Actinopterygii</taxon>
        <taxon>Neopterygii</taxon>
        <taxon>Teleostei</taxon>
        <taxon>Stomiati</taxon>
        <taxon>Osmeriformes</taxon>
        <taxon>Osmeridae</taxon>
        <taxon>Osmerus</taxon>
    </lineage>
</organism>
<name>SEH1_OSMMO</name>
<comment type="function">
    <text evidence="1">Component of the Nup107-160 subcomplex of the nuclear pore complex (NPC). The Nup107-160 subcomplex is required for the assembly of a functional NPC. The Nup107-160 subcomplex is also required for normal kinetochore microtubule attachment, mitotic progression and chromosome segregation. This subunit plays a role in recruitment of the Nup107-160 subcomplex to the kinetochore.</text>
</comment>
<comment type="function">
    <text evidence="1">As a component of the GATOR2 complex, functions as an activator of the amino acid-sensing branch of the mTORC1 signaling pathway. The GATOR2 complex indirectly activates mTORC1 through the inhibition of the GATOR1 subcomplex. GATOR2 probably acts as an E3 ubiquitin-protein ligase toward GATOR1. In the presence of abundant amino acids, the GATOR2 complex mediates ubiquitination of the NPRL2 core component of the GATOR1 complex, leading to GATOR1 inactivation. In the absence of amino acids, GATOR2 is inhibited, activating the GATOR1 complex.</text>
</comment>
<comment type="activity regulation">
    <text evidence="1">The GATOR2 complex is negatively regulated by the upstream amino acid sensors CASTOR1 and SESN2, which sequester the GATOR2 complex in absence of amino acids. In the presence of abundant amino acids, GATOR2 is released from CASTOR1 and SESN2 and activated.</text>
</comment>
<comment type="subunit">
    <text evidence="1">Component of the Nup107-160 subcomplex of the nuclear pore complex (NPC). The Nup107-160 subcomplex includes NUP160, NUP133, NUP107, NUP98, NUP85, NUP43, NUP37, SEH1 and SEC13. Component of the GATOR2 subcomplex, composed of MIOS, SEC13, SEH1L, WDR24 and WDR59. The GATOR2 complex interacts with CASTOR1 and CASTOR2; the interaction is negatively regulated by arginine. The GATOR2 complex interacts with SESN1, SESN2 and SESN3; the interaction is negatively regulated by amino acids.</text>
</comment>
<comment type="subcellular location">
    <subcellularLocation>
        <location evidence="1">Chromosome</location>
        <location evidence="1">Centromere</location>
        <location evidence="1">Kinetochore</location>
    </subcellularLocation>
    <subcellularLocation>
        <location evidence="1">Nucleus</location>
        <location evidence="1">Nuclear pore complex</location>
    </subcellularLocation>
    <subcellularLocation>
        <location evidence="1">Lysosome membrane</location>
    </subcellularLocation>
</comment>
<comment type="similarity">
    <text evidence="3">Belongs to the WD repeat SEC13 family.</text>
</comment>